<feature type="chain" id="PRO_0000081807" description="mRNA 3'-end-processing protein RNA15">
    <location>
        <begin position="1"/>
        <end position="296"/>
    </location>
</feature>
<feature type="domain" description="RRM" evidence="1">
    <location>
        <begin position="18"/>
        <end position="96"/>
    </location>
</feature>
<feature type="region of interest" description="Disordered" evidence="2">
    <location>
        <begin position="99"/>
        <end position="140"/>
    </location>
</feature>
<feature type="compositionally biased region" description="Low complexity" evidence="2">
    <location>
        <begin position="100"/>
        <end position="135"/>
    </location>
</feature>
<feature type="strand" evidence="9">
    <location>
        <begin position="18"/>
        <end position="24"/>
    </location>
</feature>
<feature type="helix" evidence="9">
    <location>
        <begin position="31"/>
        <end position="39"/>
    </location>
</feature>
<feature type="strand" evidence="9">
    <location>
        <begin position="44"/>
        <end position="48"/>
    </location>
</feature>
<feature type="turn" evidence="9">
    <location>
        <begin position="53"/>
        <end position="55"/>
    </location>
</feature>
<feature type="strand" evidence="9">
    <location>
        <begin position="60"/>
        <end position="68"/>
    </location>
</feature>
<feature type="helix" evidence="9">
    <location>
        <begin position="69"/>
        <end position="79"/>
    </location>
</feature>
<feature type="strand" evidence="7">
    <location>
        <begin position="85"/>
        <end position="87"/>
    </location>
</feature>
<feature type="strand" evidence="9">
    <location>
        <begin position="90"/>
        <end position="93"/>
    </location>
</feature>
<feature type="helix" evidence="9">
    <location>
        <begin position="99"/>
        <end position="101"/>
    </location>
</feature>
<feature type="helix" evidence="9">
    <location>
        <begin position="102"/>
        <end position="106"/>
    </location>
</feature>
<feature type="helix" evidence="8">
    <location>
        <begin position="139"/>
        <end position="143"/>
    </location>
</feature>
<feature type="turn" evidence="8">
    <location>
        <begin position="156"/>
        <end position="158"/>
    </location>
</feature>
<feature type="helix" evidence="8">
    <location>
        <begin position="161"/>
        <end position="170"/>
    </location>
</feature>
<feature type="helix" evidence="8">
    <location>
        <begin position="174"/>
        <end position="190"/>
    </location>
</feature>
<feature type="helix" evidence="8">
    <location>
        <begin position="192"/>
        <end position="201"/>
    </location>
</feature>
<feature type="helix" evidence="8">
    <location>
        <begin position="203"/>
        <end position="216"/>
    </location>
</feature>
<feature type="strand" evidence="8">
    <location>
        <begin position="217"/>
        <end position="219"/>
    </location>
</feature>
<feature type="helix" evidence="8">
    <location>
        <begin position="221"/>
        <end position="224"/>
    </location>
</feature>
<feature type="turn" evidence="8">
    <location>
        <begin position="225"/>
        <end position="227"/>
    </location>
</feature>
<organism>
    <name type="scientific">Saccharomyces cerevisiae (strain ATCC 204508 / S288c)</name>
    <name type="common">Baker's yeast</name>
    <dbReference type="NCBI Taxonomy" id="559292"/>
    <lineage>
        <taxon>Eukaryota</taxon>
        <taxon>Fungi</taxon>
        <taxon>Dikarya</taxon>
        <taxon>Ascomycota</taxon>
        <taxon>Saccharomycotina</taxon>
        <taxon>Saccharomycetes</taxon>
        <taxon>Saccharomycetales</taxon>
        <taxon>Saccharomycetaceae</taxon>
        <taxon>Saccharomyces</taxon>
    </lineage>
</organism>
<comment type="function">
    <text evidence="3 5">RNA-binding component of the cleavage factor IA (CFIA) complex, which is involved in the endonucleolytic cleavage during polyadenylation-dependent pre-mRNA 3'-end formation and cooperates with the cleavage factor NAB4/CFIB and the cleavage and polyadenylation factor (CPF) complex. Binds to A-rich RNA sequence elements.</text>
</comment>
<comment type="subunit">
    <text evidence="6">Component of the CFIA complex, which is composed of RNA14, RNA15, PCF11 and CLP1. Interacts directly with RNA14. Interacts with polyadenylate-binding protein PAB1.</text>
</comment>
<comment type="interaction">
    <interactant intactId="EBI-15640">
        <id>P25299</id>
    </interactant>
    <interactant intactId="EBI-12980">
        <id>P39081</id>
        <label>PCF11</label>
    </interactant>
    <organismsDiffer>false</organismsDiffer>
    <experiments>9</experiments>
</comment>
<comment type="interaction">
    <interactant intactId="EBI-15640">
        <id>P25299</id>
    </interactant>
    <interactant intactId="EBI-15632">
        <id>P25298</id>
        <label>RNA14</label>
    </interactant>
    <organismsDiffer>false</organismsDiffer>
    <experiments>10</experiments>
</comment>
<comment type="interaction">
    <interactant intactId="EBI-15640">
        <id>P25299</id>
    </interactant>
    <interactant intactId="EBI-18492">
        <id>P54000</id>
        <label>SUB1</label>
    </interactant>
    <organismsDiffer>false</organismsDiffer>
    <experiments>2</experiments>
</comment>
<comment type="subcellular location">
    <subcellularLocation>
        <location>Nucleus</location>
    </subcellularLocation>
</comment>
<comment type="miscellaneous">
    <text evidence="4">Present with 6350 molecules/cell in log phase SD medium.</text>
</comment>
<accession>P25299</accession>
<accession>D6VU95</accession>
<sequence length="296" mass="32791">MNRQSGVNAGVQNNPPSRVVYLGSIPYDQTEEQILDLCSNVGPVINLKMMFDPQTGRSKGYAFIEFRDLESSASAVRNLNGYQLGSRFLKCGYSSNSDISGVSQQQQQQYNNINGNNNNNGNNNNNSNGPDFQNSGNANFLSQKFPELPSGIDVNINMTTPAMMISSELAKKPKEVQLKFLQKFQEWTRAHPEDAVSLLELCPQLSFVTAELLLTNGICKVDDLIPLASRPQEEASATNNNSVNEVVDPAVLNKQKELLKQVLQLNDSQISILPDDERMAIWDLKQKALRGEFGAF</sequence>
<evidence type="ECO:0000255" key="1">
    <source>
        <dbReference type="PROSITE-ProRule" id="PRU00176"/>
    </source>
</evidence>
<evidence type="ECO:0000256" key="2">
    <source>
        <dbReference type="SAM" id="MobiDB-lite"/>
    </source>
</evidence>
<evidence type="ECO:0000269" key="3">
    <source>
    </source>
</evidence>
<evidence type="ECO:0000269" key="4">
    <source>
    </source>
</evidence>
<evidence type="ECO:0000269" key="5">
    <source>
    </source>
</evidence>
<evidence type="ECO:0000269" key="6">
    <source>
    </source>
</evidence>
<evidence type="ECO:0007829" key="7">
    <source>
        <dbReference type="PDB" id="2KM8"/>
    </source>
</evidence>
<evidence type="ECO:0007829" key="8">
    <source>
        <dbReference type="PDB" id="2L9B"/>
    </source>
</evidence>
<evidence type="ECO:0007829" key="9">
    <source>
        <dbReference type="PDB" id="2X1F"/>
    </source>
</evidence>
<proteinExistence type="evidence at protein level"/>
<keyword id="KW-0002">3D-structure</keyword>
<keyword id="KW-0507">mRNA processing</keyword>
<keyword id="KW-0539">Nucleus</keyword>
<keyword id="KW-1185">Reference proteome</keyword>
<keyword id="KW-0694">RNA-binding</keyword>
<name>RNA15_YEAST</name>
<gene>
    <name type="primary">RNA15</name>
    <name type="ordered locus">YGL044C</name>
</gene>
<reference key="1">
    <citation type="journal article" date="1991" name="Mol. Cell. Biol.">
        <title>Mutations in the yeast RNA14 and RNA15 genes result in an abnormal mRNA decay rate; sequence analysis reveals an RNA-binding domain in the RNA15 protein.</title>
        <authorList>
            <person name="Minvielle-Sebastia L."/>
            <person name="Winsor B."/>
            <person name="Bonneaud N."/>
            <person name="Lacroute F."/>
        </authorList>
    </citation>
    <scope>NUCLEOTIDE SEQUENCE [GENOMIC DNA]</scope>
    <source>
        <strain>ATCC 28383 / FL100 / VTT C-80102</strain>
    </source>
</reference>
<reference key="2">
    <citation type="journal article" date="1997" name="Yeast">
        <title>The characterization of two new clusters of duplicated genes suggests a 'Lego' organization of the yeast Saccharomyces cerevisiae chromosomes.</title>
        <authorList>
            <person name="Feuermann M."/>
            <person name="de Montigny J."/>
            <person name="Potier S."/>
            <person name="Souciet J.-L."/>
        </authorList>
    </citation>
    <scope>NUCLEOTIDE SEQUENCE [GENOMIC DNA]</scope>
    <source>
        <strain>ATCC 204508 / S288c</strain>
    </source>
</reference>
<reference key="3">
    <citation type="journal article" date="1997" name="Nature">
        <title>The nucleotide sequence of Saccharomyces cerevisiae chromosome VII.</title>
        <authorList>
            <person name="Tettelin H."/>
            <person name="Agostoni-Carbone M.L."/>
            <person name="Albermann K."/>
            <person name="Albers M."/>
            <person name="Arroyo J."/>
            <person name="Backes U."/>
            <person name="Barreiros T."/>
            <person name="Bertani I."/>
            <person name="Bjourson A.J."/>
            <person name="Brueckner M."/>
            <person name="Bruschi C.V."/>
            <person name="Carignani G."/>
            <person name="Castagnoli L."/>
            <person name="Cerdan E."/>
            <person name="Clemente M.L."/>
            <person name="Coblenz A."/>
            <person name="Coglievina M."/>
            <person name="Coissac E."/>
            <person name="Defoor E."/>
            <person name="Del Bino S."/>
            <person name="Delius H."/>
            <person name="Delneri D."/>
            <person name="de Wergifosse P."/>
            <person name="Dujon B."/>
            <person name="Durand P."/>
            <person name="Entian K.-D."/>
            <person name="Eraso P."/>
            <person name="Escribano V."/>
            <person name="Fabiani L."/>
            <person name="Fartmann B."/>
            <person name="Feroli F."/>
            <person name="Feuermann M."/>
            <person name="Frontali L."/>
            <person name="Garcia-Gonzalez M."/>
            <person name="Garcia-Saez M.I."/>
            <person name="Goffeau A."/>
            <person name="Guerreiro P."/>
            <person name="Hani J."/>
            <person name="Hansen M."/>
            <person name="Hebling U."/>
            <person name="Hernandez K."/>
            <person name="Heumann K."/>
            <person name="Hilger F."/>
            <person name="Hofmann B."/>
            <person name="Indge K.J."/>
            <person name="James C.M."/>
            <person name="Klima R."/>
            <person name="Koetter P."/>
            <person name="Kramer B."/>
            <person name="Kramer W."/>
            <person name="Lauquin G."/>
            <person name="Leuther H."/>
            <person name="Louis E.J."/>
            <person name="Maillier E."/>
            <person name="Marconi A."/>
            <person name="Martegani E."/>
            <person name="Mazon M.J."/>
            <person name="Mazzoni C."/>
            <person name="McReynolds A.D.K."/>
            <person name="Melchioretto P."/>
            <person name="Mewes H.-W."/>
            <person name="Minenkova O."/>
            <person name="Mueller-Auer S."/>
            <person name="Nawrocki A."/>
            <person name="Netter P."/>
            <person name="Neu R."/>
            <person name="Nombela C."/>
            <person name="Oliver S.G."/>
            <person name="Panzeri L."/>
            <person name="Paoluzi S."/>
            <person name="Plevani P."/>
            <person name="Portetelle D."/>
            <person name="Portillo F."/>
            <person name="Potier S."/>
            <person name="Purnelle B."/>
            <person name="Rieger M."/>
            <person name="Riles L."/>
            <person name="Rinaldi T."/>
            <person name="Robben J."/>
            <person name="Rodrigues-Pousada C."/>
            <person name="Rodriguez-Belmonte E."/>
            <person name="Rodriguez-Torres A.M."/>
            <person name="Rose M."/>
            <person name="Ruzzi M."/>
            <person name="Saliola M."/>
            <person name="Sanchez-Perez M."/>
            <person name="Schaefer B."/>
            <person name="Schaefer M."/>
            <person name="Scharfe M."/>
            <person name="Schmidheini T."/>
            <person name="Schreer A."/>
            <person name="Skala J."/>
            <person name="Souciet J.-L."/>
            <person name="Steensma H.Y."/>
            <person name="Talla E."/>
            <person name="Thierry A."/>
            <person name="Vandenbol M."/>
            <person name="van der Aart Q.J.M."/>
            <person name="Van Dyck L."/>
            <person name="Vanoni M."/>
            <person name="Verhasselt P."/>
            <person name="Voet M."/>
            <person name="Volckaert G."/>
            <person name="Wambutt R."/>
            <person name="Watson M.D."/>
            <person name="Weber N."/>
            <person name="Wedler E."/>
            <person name="Wedler H."/>
            <person name="Wipfli P."/>
            <person name="Wolf K."/>
            <person name="Wright L.F."/>
            <person name="Zaccaria P."/>
            <person name="Zimmermann M."/>
            <person name="Zollner A."/>
            <person name="Kleine K."/>
        </authorList>
    </citation>
    <scope>NUCLEOTIDE SEQUENCE [LARGE SCALE GENOMIC DNA]</scope>
    <source>
        <strain>ATCC 204508 / S288c</strain>
    </source>
</reference>
<reference key="4">
    <citation type="journal article" date="2014" name="G3 (Bethesda)">
        <title>The reference genome sequence of Saccharomyces cerevisiae: Then and now.</title>
        <authorList>
            <person name="Engel S.R."/>
            <person name="Dietrich F.S."/>
            <person name="Fisk D.G."/>
            <person name="Binkley G."/>
            <person name="Balakrishnan R."/>
            <person name="Costanzo M.C."/>
            <person name="Dwight S.S."/>
            <person name="Hitz B.C."/>
            <person name="Karra K."/>
            <person name="Nash R.S."/>
            <person name="Weng S."/>
            <person name="Wong E.D."/>
            <person name="Lloyd P."/>
            <person name="Skrzypek M.S."/>
            <person name="Miyasato S.R."/>
            <person name="Simison M."/>
            <person name="Cherry J.M."/>
        </authorList>
    </citation>
    <scope>GENOME REANNOTATION</scope>
    <source>
        <strain>ATCC 204508 / S288c</strain>
    </source>
</reference>
<reference key="5">
    <citation type="journal article" date="1994" name="Science">
        <title>RNA14 and RNA15 proteins as components of a yeast pre-mRNA 3'-end processing factor.</title>
        <authorList>
            <person name="Minvielle-Sebastia L."/>
            <person name="Preker P.J."/>
            <person name="Keller W."/>
        </authorList>
    </citation>
    <scope>FUNCTION</scope>
</reference>
<reference key="6">
    <citation type="journal article" date="1997" name="Mol. Cell. Biol.">
        <title>Yeast Pab1 interacts with Rna15 and participates in the control of the poly(A) tail length in vitro.</title>
        <authorList>
            <person name="Amrani N."/>
            <person name="Minet M."/>
            <person name="Le Gouar M."/>
            <person name="Lacroute F."/>
            <person name="Wyers F."/>
        </authorList>
    </citation>
    <scope>INTERACTION WITH PAB1</scope>
</reference>
<reference key="7">
    <citation type="journal article" date="2001" name="Proc. Natl. Acad. Sci. U.S.A.">
        <title>Five subunits are required for reconstitution of the cleavage and polyadenylation activities of Saccharomyces cerevisiae cleavage factor I.</title>
        <authorList>
            <person name="Gross S."/>
            <person name="Moore C."/>
        </authorList>
    </citation>
    <scope>FUNCTION OF THE CFIA COMPLEX</scope>
</reference>
<reference key="8">
    <citation type="journal article" date="2001" name="Mol. Cell. Biol.">
        <title>Rna15 interaction with the A-rich yeast polyadenylation signal is an essential step in mRNA 3'-end formation.</title>
        <authorList>
            <person name="Gross S."/>
            <person name="Moore C.L."/>
        </authorList>
    </citation>
    <scope>RNA-BINDING</scope>
</reference>
<reference key="9">
    <citation type="journal article" date="1996" name="J. Biol. Chem.">
        <title>Purification of the Saccharomyces cerevisiae cleavage/polyadenylation factor I. Separation into two components that are required for both cleavage and polyadenylation of mRNA 3' ends.</title>
        <authorList>
            <person name="Kessler M.M."/>
            <person name="Zhao J."/>
            <person name="Moore C.L."/>
        </authorList>
    </citation>
    <scope>COMPOSITION OF THE CFIA COMPLEX</scope>
</reference>
<reference key="10">
    <citation type="journal article" date="2003" name="Nature">
        <title>Global analysis of protein expression in yeast.</title>
        <authorList>
            <person name="Ghaemmaghami S."/>
            <person name="Huh W.-K."/>
            <person name="Bower K."/>
            <person name="Howson R.W."/>
            <person name="Belle A."/>
            <person name="Dephoure N."/>
            <person name="O'Shea E.K."/>
            <person name="Weissman J.S."/>
        </authorList>
    </citation>
    <scope>LEVEL OF PROTEIN EXPRESSION [LARGE SCALE ANALYSIS]</scope>
</reference>
<dbReference type="EMBL" id="M73462">
    <property type="protein sequence ID" value="AAA34984.1"/>
    <property type="molecule type" value="Genomic_DNA"/>
</dbReference>
<dbReference type="EMBL" id="Z72566">
    <property type="protein sequence ID" value="CAA96746.1"/>
    <property type="molecule type" value="Genomic_DNA"/>
</dbReference>
<dbReference type="EMBL" id="BK006941">
    <property type="protein sequence ID" value="DAA08056.1"/>
    <property type="molecule type" value="Genomic_DNA"/>
</dbReference>
<dbReference type="PIR" id="B40257">
    <property type="entry name" value="B40257"/>
</dbReference>
<dbReference type="RefSeq" id="NP_011471.1">
    <property type="nucleotide sequence ID" value="NM_001180909.1"/>
</dbReference>
<dbReference type="PDB" id="2KM8">
    <property type="method" value="NMR"/>
    <property type="chains" value="B=14-97"/>
</dbReference>
<dbReference type="PDB" id="2L9B">
    <property type="method" value="NMR"/>
    <property type="chains" value="A=127-232"/>
</dbReference>
<dbReference type="PDB" id="2X1A">
    <property type="method" value="X-ray"/>
    <property type="resolution" value="2.05 A"/>
    <property type="chains" value="A=16-111"/>
</dbReference>
<dbReference type="PDB" id="2X1B">
    <property type="method" value="X-ray"/>
    <property type="resolution" value="1.80 A"/>
    <property type="chains" value="A=16-111"/>
</dbReference>
<dbReference type="PDB" id="2X1F">
    <property type="method" value="X-ray"/>
    <property type="resolution" value="1.60 A"/>
    <property type="chains" value="A=16-103"/>
</dbReference>
<dbReference type="PDBsum" id="2KM8"/>
<dbReference type="PDBsum" id="2L9B"/>
<dbReference type="PDBsum" id="2X1A"/>
<dbReference type="PDBsum" id="2X1B"/>
<dbReference type="PDBsum" id="2X1F"/>
<dbReference type="BMRB" id="P25299"/>
<dbReference type="SMR" id="P25299"/>
<dbReference type="BioGRID" id="33204">
    <property type="interactions" value="320"/>
</dbReference>
<dbReference type="ComplexPortal" id="CPX-1895">
    <property type="entry name" value="mRNA cleavage factor complex CFIA"/>
</dbReference>
<dbReference type="ComplexPortal" id="CPX-1896">
    <property type="entry name" value="mRNA cleavage factor complex CFI"/>
</dbReference>
<dbReference type="DIP" id="DIP-1489N"/>
<dbReference type="FunCoup" id="P25299">
    <property type="interactions" value="180"/>
</dbReference>
<dbReference type="IntAct" id="P25299">
    <property type="interactions" value="10"/>
</dbReference>
<dbReference type="MINT" id="P25299"/>
<dbReference type="STRING" id="4932.YGL044C"/>
<dbReference type="iPTMnet" id="P25299"/>
<dbReference type="PaxDb" id="4932-YGL044C"/>
<dbReference type="PeptideAtlas" id="P25299"/>
<dbReference type="EnsemblFungi" id="YGL044C_mRNA">
    <property type="protein sequence ID" value="YGL044C"/>
    <property type="gene ID" value="YGL044C"/>
</dbReference>
<dbReference type="GeneID" id="852838"/>
<dbReference type="KEGG" id="sce:YGL044C"/>
<dbReference type="AGR" id="SGD:S000003012"/>
<dbReference type="SGD" id="S000003012">
    <property type="gene designation" value="RNA15"/>
</dbReference>
<dbReference type="VEuPathDB" id="FungiDB:YGL044C"/>
<dbReference type="eggNOG" id="KOG0108">
    <property type="taxonomic scope" value="Eukaryota"/>
</dbReference>
<dbReference type="GeneTree" id="ENSGT00940000168465"/>
<dbReference type="HOGENOM" id="CLU_028601_0_1_1"/>
<dbReference type="InParanoid" id="P25299"/>
<dbReference type="OMA" id="NEYEIMG"/>
<dbReference type="OrthoDB" id="15688at2759"/>
<dbReference type="BioCyc" id="YEAST:G3O-30555-MONOMER"/>
<dbReference type="BioGRID-ORCS" id="852838">
    <property type="hits" value="1 hit in 10 CRISPR screens"/>
</dbReference>
<dbReference type="EvolutionaryTrace" id="P25299"/>
<dbReference type="PRO" id="PR:P25299"/>
<dbReference type="Proteomes" id="UP000002311">
    <property type="component" value="Chromosome VII"/>
</dbReference>
<dbReference type="RNAct" id="P25299">
    <property type="molecule type" value="protein"/>
</dbReference>
<dbReference type="GO" id="GO:0005847">
    <property type="term" value="C:mRNA cleavage and polyadenylation specificity factor complex"/>
    <property type="evidence" value="ECO:0000318"/>
    <property type="project" value="GO_Central"/>
</dbReference>
<dbReference type="GO" id="GO:0005849">
    <property type="term" value="C:mRNA cleavage factor complex"/>
    <property type="evidence" value="ECO:0000353"/>
    <property type="project" value="ComplexPortal"/>
</dbReference>
<dbReference type="GO" id="GO:0005848">
    <property type="term" value="C:mRNA cleavage stimulating factor complex"/>
    <property type="evidence" value="ECO:0000353"/>
    <property type="project" value="SGD"/>
</dbReference>
<dbReference type="GO" id="GO:0060090">
    <property type="term" value="F:molecular adaptor activity"/>
    <property type="evidence" value="ECO:0000269"/>
    <property type="project" value="DisProt"/>
</dbReference>
<dbReference type="GO" id="GO:0003729">
    <property type="term" value="F:mRNA binding"/>
    <property type="evidence" value="ECO:0000314"/>
    <property type="project" value="SGD"/>
</dbReference>
<dbReference type="GO" id="GO:0031124">
    <property type="term" value="P:mRNA 3'-end processing"/>
    <property type="evidence" value="ECO:0000314"/>
    <property type="project" value="ComplexPortal"/>
</dbReference>
<dbReference type="GO" id="GO:0006397">
    <property type="term" value="P:mRNA processing"/>
    <property type="evidence" value="ECO:0000314"/>
    <property type="project" value="SGD"/>
</dbReference>
<dbReference type="CDD" id="cd12398">
    <property type="entry name" value="RRM_CSTF2_RNA15_like"/>
    <property type="match status" value="1"/>
</dbReference>
<dbReference type="DisProt" id="DP02761"/>
<dbReference type="FunFam" id="1.10.20.70:FF:000004">
    <property type="entry name" value="Rna15p"/>
    <property type="match status" value="1"/>
</dbReference>
<dbReference type="FunFam" id="1.25.40.630:FF:000004">
    <property type="entry name" value="Rna15p"/>
    <property type="match status" value="1"/>
</dbReference>
<dbReference type="FunFam" id="3.30.70.330:FF:000916">
    <property type="entry name" value="Rna15p"/>
    <property type="match status" value="1"/>
</dbReference>
<dbReference type="Gene3D" id="1.25.40.630">
    <property type="match status" value="1"/>
</dbReference>
<dbReference type="Gene3D" id="3.30.70.330">
    <property type="match status" value="1"/>
</dbReference>
<dbReference type="Gene3D" id="1.10.20.70">
    <property type="entry name" value="Transcription termination and cleavage factor, C-terminal domain"/>
    <property type="match status" value="1"/>
</dbReference>
<dbReference type="InterPro" id="IPR026896">
    <property type="entry name" value="CSTF_C"/>
</dbReference>
<dbReference type="InterPro" id="IPR038192">
    <property type="entry name" value="CSTF_C_sf"/>
</dbReference>
<dbReference type="InterPro" id="IPR012677">
    <property type="entry name" value="Nucleotide-bd_a/b_plait_sf"/>
</dbReference>
<dbReference type="InterPro" id="IPR035979">
    <property type="entry name" value="RBD_domain_sf"/>
</dbReference>
<dbReference type="InterPro" id="IPR000504">
    <property type="entry name" value="RRM_dom"/>
</dbReference>
<dbReference type="PANTHER" id="PTHR45735">
    <property type="entry name" value="CLEAVAGE STIMULATION FACTOR SUBUNIT 2"/>
    <property type="match status" value="1"/>
</dbReference>
<dbReference type="PANTHER" id="PTHR45735:SF2">
    <property type="entry name" value="CLEAVAGE STIMULATION FACTOR SUBUNIT 2"/>
    <property type="match status" value="1"/>
</dbReference>
<dbReference type="Pfam" id="PF14304">
    <property type="entry name" value="CSTF_C"/>
    <property type="match status" value="1"/>
</dbReference>
<dbReference type="Pfam" id="PF00076">
    <property type="entry name" value="RRM_1"/>
    <property type="match status" value="1"/>
</dbReference>
<dbReference type="SMART" id="SM00360">
    <property type="entry name" value="RRM"/>
    <property type="match status" value="1"/>
</dbReference>
<dbReference type="SUPFAM" id="SSF54928">
    <property type="entry name" value="RNA-binding domain, RBD"/>
    <property type="match status" value="1"/>
</dbReference>
<dbReference type="PROSITE" id="PS50102">
    <property type="entry name" value="RRM"/>
    <property type="match status" value="1"/>
</dbReference>
<protein>
    <recommendedName>
        <fullName>mRNA 3'-end-processing protein RNA15</fullName>
    </recommendedName>
</protein>